<accession>Q0A5B6</accession>
<organism>
    <name type="scientific">Alkalilimnicola ehrlichii (strain ATCC BAA-1101 / DSM 17681 / MLHE-1)</name>
    <dbReference type="NCBI Taxonomy" id="187272"/>
    <lineage>
        <taxon>Bacteria</taxon>
        <taxon>Pseudomonadati</taxon>
        <taxon>Pseudomonadota</taxon>
        <taxon>Gammaproteobacteria</taxon>
        <taxon>Chromatiales</taxon>
        <taxon>Ectothiorhodospiraceae</taxon>
        <taxon>Alkalilimnicola</taxon>
    </lineage>
</organism>
<reference key="1">
    <citation type="submission" date="2006-08" db="EMBL/GenBank/DDBJ databases">
        <title>Complete sequence of Alkalilimnicola ehrilichei MLHE-1.</title>
        <authorList>
            <person name="Copeland A."/>
            <person name="Lucas S."/>
            <person name="Lapidus A."/>
            <person name="Barry K."/>
            <person name="Detter J.C."/>
            <person name="Glavina del Rio T."/>
            <person name="Hammon N."/>
            <person name="Israni S."/>
            <person name="Dalin E."/>
            <person name="Tice H."/>
            <person name="Pitluck S."/>
            <person name="Sims D."/>
            <person name="Brettin T."/>
            <person name="Bruce D."/>
            <person name="Han C."/>
            <person name="Tapia R."/>
            <person name="Gilna P."/>
            <person name="Schmutz J."/>
            <person name="Larimer F."/>
            <person name="Land M."/>
            <person name="Hauser L."/>
            <person name="Kyrpides N."/>
            <person name="Mikhailova N."/>
            <person name="Oremland R.S."/>
            <person name="Hoeft S.E."/>
            <person name="Switzer-Blum J."/>
            <person name="Kulp T."/>
            <person name="King G."/>
            <person name="Tabita R."/>
            <person name="Witte B."/>
            <person name="Santini J.M."/>
            <person name="Basu P."/>
            <person name="Hollibaugh J.T."/>
            <person name="Xie G."/>
            <person name="Stolz J.F."/>
            <person name="Richardson P."/>
        </authorList>
    </citation>
    <scope>NUCLEOTIDE SEQUENCE [LARGE SCALE GENOMIC DNA]</scope>
    <source>
        <strain>ATCC BAA-1101 / DSM 17681 / MLHE-1</strain>
    </source>
</reference>
<evidence type="ECO:0000255" key="1">
    <source>
        <dbReference type="HAMAP-Rule" id="MF_00598"/>
    </source>
</evidence>
<keyword id="KW-1185">Reference proteome</keyword>
<proteinExistence type="inferred from homology"/>
<name>SMG_ALKEH</name>
<sequence length="157" mass="18221">MKQSIFEVLIYLFENYLANDDEPSPDRDSLESELFEAGFTPLEIRKAFDWLDGLADSRNMPATVTGDRAIRVYHERETVRLDVESRGFILFLEQAGILDRAGRELVIDRLMALEDDDVDLDTVKWVVLMVLFNQPGQEEAFNWMEDLLFDNPVHLVH</sequence>
<protein>
    <recommendedName>
        <fullName evidence="1">Protein Smg homolog</fullName>
    </recommendedName>
</protein>
<gene>
    <name evidence="1" type="primary">smg</name>
    <name type="ordered locus">Mlg_2631</name>
</gene>
<dbReference type="EMBL" id="CP000453">
    <property type="protein sequence ID" value="ABI57971.1"/>
    <property type="molecule type" value="Genomic_DNA"/>
</dbReference>
<dbReference type="RefSeq" id="WP_011630364.1">
    <property type="nucleotide sequence ID" value="NC_008340.1"/>
</dbReference>
<dbReference type="SMR" id="Q0A5B6"/>
<dbReference type="KEGG" id="aeh:Mlg_2631"/>
<dbReference type="eggNOG" id="COG2922">
    <property type="taxonomic scope" value="Bacteria"/>
</dbReference>
<dbReference type="HOGENOM" id="CLU_133242_0_0_6"/>
<dbReference type="OrthoDB" id="9788984at2"/>
<dbReference type="Proteomes" id="UP000001962">
    <property type="component" value="Chromosome"/>
</dbReference>
<dbReference type="HAMAP" id="MF_00598">
    <property type="entry name" value="Smg"/>
    <property type="match status" value="1"/>
</dbReference>
<dbReference type="InterPro" id="IPR007456">
    <property type="entry name" value="Smg"/>
</dbReference>
<dbReference type="PANTHER" id="PTHR38692">
    <property type="entry name" value="PROTEIN SMG"/>
    <property type="match status" value="1"/>
</dbReference>
<dbReference type="PANTHER" id="PTHR38692:SF1">
    <property type="entry name" value="PROTEIN SMG"/>
    <property type="match status" value="1"/>
</dbReference>
<dbReference type="Pfam" id="PF04361">
    <property type="entry name" value="DUF494"/>
    <property type="match status" value="1"/>
</dbReference>
<comment type="similarity">
    <text evidence="1">Belongs to the Smg family.</text>
</comment>
<feature type="chain" id="PRO_1000025644" description="Protein Smg homolog">
    <location>
        <begin position="1"/>
        <end position="157"/>
    </location>
</feature>